<accession>B7K5N3</accession>
<evidence type="ECO:0000255" key="1">
    <source>
        <dbReference type="HAMAP-Rule" id="MF_00373"/>
    </source>
</evidence>
<evidence type="ECO:0000305" key="2"/>
<reference key="1">
    <citation type="journal article" date="2011" name="MBio">
        <title>Novel metabolic attributes of the genus Cyanothece, comprising a group of unicellular nitrogen-fixing Cyanobacteria.</title>
        <authorList>
            <person name="Bandyopadhyay A."/>
            <person name="Elvitigala T."/>
            <person name="Welsh E."/>
            <person name="Stockel J."/>
            <person name="Liberton M."/>
            <person name="Min H."/>
            <person name="Sherman L.A."/>
            <person name="Pakrasi H.B."/>
        </authorList>
    </citation>
    <scope>NUCLEOTIDE SEQUENCE [LARGE SCALE GENOMIC DNA]</scope>
    <source>
        <strain>PCC 8801 / RF-1</strain>
    </source>
</reference>
<proteinExistence type="inferred from homology"/>
<organism>
    <name type="scientific">Rippkaea orientalis (strain PCC 8801 / RF-1)</name>
    <name type="common">Cyanothece sp. (strain PCC 8801)</name>
    <dbReference type="NCBI Taxonomy" id="41431"/>
    <lineage>
        <taxon>Bacteria</taxon>
        <taxon>Bacillati</taxon>
        <taxon>Cyanobacteriota</taxon>
        <taxon>Cyanophyceae</taxon>
        <taxon>Oscillatoriophycideae</taxon>
        <taxon>Chroococcales</taxon>
        <taxon>Aphanothecaceae</taxon>
        <taxon>Rippkaea</taxon>
        <taxon>Rippkaea orientalis</taxon>
    </lineage>
</organism>
<keyword id="KW-1185">Reference proteome</keyword>
<keyword id="KW-0687">Ribonucleoprotein</keyword>
<keyword id="KW-0689">Ribosomal protein</keyword>
<dbReference type="EMBL" id="CP001287">
    <property type="protein sequence ID" value="ACK66766.1"/>
    <property type="molecule type" value="Genomic_DNA"/>
</dbReference>
<dbReference type="RefSeq" id="WP_012596033.1">
    <property type="nucleotide sequence ID" value="NC_011726.1"/>
</dbReference>
<dbReference type="SMR" id="B7K5N3"/>
<dbReference type="STRING" id="41431.PCC8801_2765"/>
<dbReference type="KEGG" id="cyp:PCC8801_2765"/>
<dbReference type="eggNOG" id="COG0227">
    <property type="taxonomic scope" value="Bacteria"/>
</dbReference>
<dbReference type="HOGENOM" id="CLU_064548_3_0_3"/>
<dbReference type="OrthoDB" id="9805609at2"/>
<dbReference type="Proteomes" id="UP000008204">
    <property type="component" value="Chromosome"/>
</dbReference>
<dbReference type="GO" id="GO:1990904">
    <property type="term" value="C:ribonucleoprotein complex"/>
    <property type="evidence" value="ECO:0007669"/>
    <property type="project" value="UniProtKB-KW"/>
</dbReference>
<dbReference type="GO" id="GO:0005840">
    <property type="term" value="C:ribosome"/>
    <property type="evidence" value="ECO:0007669"/>
    <property type="project" value="UniProtKB-KW"/>
</dbReference>
<dbReference type="GO" id="GO:0003735">
    <property type="term" value="F:structural constituent of ribosome"/>
    <property type="evidence" value="ECO:0007669"/>
    <property type="project" value="InterPro"/>
</dbReference>
<dbReference type="GO" id="GO:0006412">
    <property type="term" value="P:translation"/>
    <property type="evidence" value="ECO:0007669"/>
    <property type="project" value="UniProtKB-UniRule"/>
</dbReference>
<dbReference type="Gene3D" id="2.30.170.40">
    <property type="entry name" value="Ribosomal protein L28/L24"/>
    <property type="match status" value="1"/>
</dbReference>
<dbReference type="HAMAP" id="MF_00373">
    <property type="entry name" value="Ribosomal_bL28"/>
    <property type="match status" value="1"/>
</dbReference>
<dbReference type="InterPro" id="IPR026569">
    <property type="entry name" value="Ribosomal_bL28"/>
</dbReference>
<dbReference type="InterPro" id="IPR034704">
    <property type="entry name" value="Ribosomal_bL28/bL31-like_sf"/>
</dbReference>
<dbReference type="InterPro" id="IPR001383">
    <property type="entry name" value="Ribosomal_bL28_bact-type"/>
</dbReference>
<dbReference type="InterPro" id="IPR037147">
    <property type="entry name" value="Ribosomal_bL28_sf"/>
</dbReference>
<dbReference type="NCBIfam" id="TIGR00009">
    <property type="entry name" value="L28"/>
    <property type="match status" value="1"/>
</dbReference>
<dbReference type="PANTHER" id="PTHR13528">
    <property type="entry name" value="39S RIBOSOMAL PROTEIN L28, MITOCHONDRIAL"/>
    <property type="match status" value="1"/>
</dbReference>
<dbReference type="PANTHER" id="PTHR13528:SF2">
    <property type="entry name" value="LARGE RIBOSOMAL SUBUNIT PROTEIN BL28M"/>
    <property type="match status" value="1"/>
</dbReference>
<dbReference type="Pfam" id="PF00830">
    <property type="entry name" value="Ribosomal_L28"/>
    <property type="match status" value="1"/>
</dbReference>
<dbReference type="SUPFAM" id="SSF143800">
    <property type="entry name" value="L28p-like"/>
    <property type="match status" value="1"/>
</dbReference>
<comment type="similarity">
    <text evidence="1">Belongs to the bacterial ribosomal protein bL28 family.</text>
</comment>
<sequence length="78" mass="9060">MSRKCQLTGKKANNAYAVSHSHRRTKKLQEANLQWKRVWWPEGNRWVRLRLSTKAIKTLETKGLSVMAKEAGINLNKI</sequence>
<name>RL28_RIPO1</name>
<protein>
    <recommendedName>
        <fullName evidence="1">Large ribosomal subunit protein bL28</fullName>
    </recommendedName>
    <alternativeName>
        <fullName evidence="2">50S ribosomal protein L28</fullName>
    </alternativeName>
</protein>
<feature type="chain" id="PRO_1000121617" description="Large ribosomal subunit protein bL28">
    <location>
        <begin position="1"/>
        <end position="78"/>
    </location>
</feature>
<gene>
    <name evidence="1" type="primary">rpmB</name>
    <name evidence="1" type="synonym">rpl28</name>
    <name type="ordered locus">PCC8801_2765</name>
</gene>